<protein>
    <recommendedName>
        <fullName>Fc receptor-like B</fullName>
    </recommendedName>
    <alternativeName>
        <fullName>Fc receptor homolog expressed in B-cells protein 2</fullName>
        <shortName>FREB-2</shortName>
    </alternativeName>
    <alternativeName>
        <fullName>Fc receptor-like and mucin-like protein 2</fullName>
    </alternativeName>
    <alternativeName>
        <fullName>Fc receptor-like protein 2</fullName>
    </alternativeName>
    <alternativeName>
        <fullName>Fc receptor-related protein Y</fullName>
        <shortName>FcRY</shortName>
    </alternativeName>
</protein>
<dbReference type="EMBL" id="DQ021957">
    <property type="protein sequence ID" value="AAY42534.1"/>
    <property type="molecule type" value="mRNA"/>
</dbReference>
<dbReference type="EMBL" id="AY786314">
    <property type="protein sequence ID" value="AAX11390.1"/>
    <property type="molecule type" value="mRNA"/>
</dbReference>
<dbReference type="EMBL" id="AY670683">
    <property type="protein sequence ID" value="AAT77987.1"/>
    <property type="molecule type" value="mRNA"/>
</dbReference>
<dbReference type="EMBL" id="AY670684">
    <property type="protein sequence ID" value="AAT77988.1"/>
    <property type="molecule type" value="mRNA"/>
</dbReference>
<dbReference type="EMBL" id="AY670685">
    <property type="protein sequence ID" value="AAT77989.1"/>
    <property type="molecule type" value="mRNA"/>
</dbReference>
<dbReference type="EMBL" id="AY670686">
    <property type="protein sequence ID" value="AAT77990.1"/>
    <property type="molecule type" value="mRNA"/>
</dbReference>
<dbReference type="EMBL" id="AY670687">
    <property type="protein sequence ID" value="AAT77991.1"/>
    <property type="molecule type" value="mRNA"/>
</dbReference>
<dbReference type="EMBL" id="EF064728">
    <property type="protein sequence ID" value="ABK41911.1"/>
    <property type="molecule type" value="Genomic_DNA"/>
</dbReference>
<dbReference type="EMBL" id="AK290733">
    <property type="protein sequence ID" value="BAF83422.1"/>
    <property type="molecule type" value="mRNA"/>
</dbReference>
<dbReference type="EMBL" id="AL359541">
    <property type="status" value="NOT_ANNOTATED_CDS"/>
    <property type="molecule type" value="Genomic_DNA"/>
</dbReference>
<dbReference type="EMBL" id="BC038564">
    <property type="protein sequence ID" value="AAH38564.2"/>
    <property type="molecule type" value="mRNA"/>
</dbReference>
<dbReference type="CCDS" id="CCDS30927.1">
    <molecule id="Q6BAA4-1"/>
</dbReference>
<dbReference type="CCDS" id="CCDS72962.1">
    <molecule id="Q6BAA4-2"/>
</dbReference>
<dbReference type="CCDS" id="CCDS72963.1">
    <molecule id="Q6BAA4-4"/>
</dbReference>
<dbReference type="CCDS" id="CCDS72964.1">
    <molecule id="Q6BAA4-3"/>
</dbReference>
<dbReference type="CCDS" id="CCDS72965.1">
    <molecule id="Q6BAA4-5"/>
</dbReference>
<dbReference type="RefSeq" id="NP_001002901.1">
    <molecule id="Q6BAA4-1"/>
    <property type="nucleotide sequence ID" value="NM_001002901.4"/>
</dbReference>
<dbReference type="RefSeq" id="NP_001275758.1">
    <molecule id="Q6BAA4-4"/>
    <property type="nucleotide sequence ID" value="NM_001288829.1"/>
</dbReference>
<dbReference type="RefSeq" id="NP_001275759.1">
    <molecule id="Q6BAA4-5"/>
    <property type="nucleotide sequence ID" value="NM_001288830.1"/>
</dbReference>
<dbReference type="RefSeq" id="NP_001275760.1">
    <molecule id="Q6BAA4-2"/>
    <property type="nucleotide sequence ID" value="NM_001288831.1"/>
</dbReference>
<dbReference type="RefSeq" id="NP_001275761.1">
    <molecule id="Q6BAA4-3"/>
    <property type="nucleotide sequence ID" value="NM_001288832.1"/>
</dbReference>
<dbReference type="RefSeq" id="NP_001307170.1">
    <molecule id="Q6BAA4-1"/>
    <property type="nucleotide sequence ID" value="NM_001320241.1"/>
</dbReference>
<dbReference type="BioGRID" id="126089">
    <property type="interactions" value="2"/>
</dbReference>
<dbReference type="FunCoup" id="Q6BAA4">
    <property type="interactions" value="471"/>
</dbReference>
<dbReference type="STRING" id="9606.ENSP00000356925"/>
<dbReference type="GlyCosmos" id="Q6BAA4">
    <property type="glycosylation" value="1 site, No reported glycans"/>
</dbReference>
<dbReference type="GlyGen" id="Q6BAA4">
    <property type="glycosylation" value="1 site"/>
</dbReference>
<dbReference type="iPTMnet" id="Q6BAA4"/>
<dbReference type="PhosphoSitePlus" id="Q6BAA4"/>
<dbReference type="BioMuta" id="FCRLB"/>
<dbReference type="DMDM" id="74757430"/>
<dbReference type="jPOST" id="Q6BAA4"/>
<dbReference type="MassIVE" id="Q6BAA4"/>
<dbReference type="PaxDb" id="9606-ENSP00000356925"/>
<dbReference type="PeptideAtlas" id="Q6BAA4"/>
<dbReference type="ProteomicsDB" id="66211">
    <molecule id="Q6BAA4-1"/>
</dbReference>
<dbReference type="ProteomicsDB" id="66212">
    <molecule id="Q6BAA4-2"/>
</dbReference>
<dbReference type="ProteomicsDB" id="66213">
    <molecule id="Q6BAA4-3"/>
</dbReference>
<dbReference type="ProteomicsDB" id="66214">
    <molecule id="Q6BAA4-4"/>
</dbReference>
<dbReference type="ProteomicsDB" id="66215">
    <molecule id="Q6BAA4-5"/>
</dbReference>
<dbReference type="TopDownProteomics" id="Q6BAA4-5">
    <molecule id="Q6BAA4-5"/>
</dbReference>
<dbReference type="Antibodypedia" id="34315">
    <property type="antibodies" value="175 antibodies from 20 providers"/>
</dbReference>
<dbReference type="DNASU" id="127943"/>
<dbReference type="Ensembl" id="ENST00000336830.9">
    <molecule id="Q6BAA4-2"/>
    <property type="protein sequence ID" value="ENSP00000338598.5"/>
    <property type="gene ID" value="ENSG00000162746.15"/>
</dbReference>
<dbReference type="Ensembl" id="ENST00000367944.3">
    <molecule id="Q6BAA4-3"/>
    <property type="protein sequence ID" value="ENSP00000356921.3"/>
    <property type="gene ID" value="ENSG00000162746.15"/>
</dbReference>
<dbReference type="Ensembl" id="ENST00000367945.5">
    <molecule id="Q6BAA4-5"/>
    <property type="protein sequence ID" value="ENSP00000356922.1"/>
    <property type="gene ID" value="ENSG00000162746.15"/>
</dbReference>
<dbReference type="Ensembl" id="ENST00000367946.7">
    <molecule id="Q6BAA4-4"/>
    <property type="protein sequence ID" value="ENSP00000356923.3"/>
    <property type="gene ID" value="ENSG00000162746.15"/>
</dbReference>
<dbReference type="Ensembl" id="ENST00000367948.7">
    <molecule id="Q6BAA4-1"/>
    <property type="protein sequence ID" value="ENSP00000356925.2"/>
    <property type="gene ID" value="ENSG00000162746.15"/>
</dbReference>
<dbReference type="GeneID" id="127943"/>
<dbReference type="KEGG" id="hsa:127943"/>
<dbReference type="MANE-Select" id="ENST00000367948.7">
    <property type="protein sequence ID" value="ENSP00000356925.2"/>
    <property type="RefSeq nucleotide sequence ID" value="NM_001002901.4"/>
    <property type="RefSeq protein sequence ID" value="NP_001002901.1"/>
</dbReference>
<dbReference type="UCSC" id="uc001gbh.4">
    <molecule id="Q6BAA4-1"/>
    <property type="organism name" value="human"/>
</dbReference>
<dbReference type="AGR" id="HGNC:26431"/>
<dbReference type="CTD" id="127943"/>
<dbReference type="DisGeNET" id="127943"/>
<dbReference type="GeneCards" id="FCRLB"/>
<dbReference type="HGNC" id="HGNC:26431">
    <property type="gene designation" value="FCRLB"/>
</dbReference>
<dbReference type="HPA" id="ENSG00000162746">
    <property type="expression patterns" value="Tissue enhanced (lymphoid)"/>
</dbReference>
<dbReference type="MIM" id="609251">
    <property type="type" value="gene"/>
</dbReference>
<dbReference type="neXtProt" id="NX_Q6BAA4"/>
<dbReference type="OpenTargets" id="ENSG00000162746"/>
<dbReference type="PharmGKB" id="PA162388195"/>
<dbReference type="VEuPathDB" id="HostDB:ENSG00000162746"/>
<dbReference type="eggNOG" id="ENOG502SH8W">
    <property type="taxonomic scope" value="Eukaryota"/>
</dbReference>
<dbReference type="GeneTree" id="ENSGT01050000244808"/>
<dbReference type="HOGENOM" id="CLU_677141_0_0_1"/>
<dbReference type="InParanoid" id="Q6BAA4"/>
<dbReference type="OMA" id="LEAYWCE"/>
<dbReference type="OrthoDB" id="6151406at2759"/>
<dbReference type="PAN-GO" id="Q6BAA4">
    <property type="GO annotations" value="4 GO annotations based on evolutionary models"/>
</dbReference>
<dbReference type="PhylomeDB" id="Q6BAA4"/>
<dbReference type="TreeFam" id="TF351107"/>
<dbReference type="PathwayCommons" id="Q6BAA4"/>
<dbReference type="BioGRID-ORCS" id="127943">
    <property type="hits" value="10 hits in 1144 CRISPR screens"/>
</dbReference>
<dbReference type="GenomeRNAi" id="127943"/>
<dbReference type="Pharos" id="Q6BAA4">
    <property type="development level" value="Tbio"/>
</dbReference>
<dbReference type="PRO" id="PR:Q6BAA4"/>
<dbReference type="Proteomes" id="UP000005640">
    <property type="component" value="Chromosome 1"/>
</dbReference>
<dbReference type="RNAct" id="Q6BAA4">
    <property type="molecule type" value="protein"/>
</dbReference>
<dbReference type="Bgee" id="ENSG00000162746">
    <property type="expression patterns" value="Expressed in primordial germ cell in gonad and 119 other cell types or tissues"/>
</dbReference>
<dbReference type="GO" id="GO:0005737">
    <property type="term" value="C:cytoplasm"/>
    <property type="evidence" value="ECO:0000314"/>
    <property type="project" value="MGI"/>
</dbReference>
<dbReference type="GO" id="GO:0005783">
    <property type="term" value="C:endoplasmic reticulum"/>
    <property type="evidence" value="ECO:0007669"/>
    <property type="project" value="UniProtKB-SubCell"/>
</dbReference>
<dbReference type="GO" id="GO:0009897">
    <property type="term" value="C:external side of plasma membrane"/>
    <property type="evidence" value="ECO:0000318"/>
    <property type="project" value="GO_Central"/>
</dbReference>
<dbReference type="GO" id="GO:0004888">
    <property type="term" value="F:transmembrane signaling receptor activity"/>
    <property type="evidence" value="ECO:0000318"/>
    <property type="project" value="GO_Central"/>
</dbReference>
<dbReference type="GO" id="GO:0007166">
    <property type="term" value="P:cell surface receptor signaling pathway"/>
    <property type="evidence" value="ECO:0000318"/>
    <property type="project" value="GO_Central"/>
</dbReference>
<dbReference type="GO" id="GO:0016064">
    <property type="term" value="P:immunoglobulin mediated immune response"/>
    <property type="evidence" value="ECO:0000318"/>
    <property type="project" value="GO_Central"/>
</dbReference>
<dbReference type="GO" id="GO:0050777">
    <property type="term" value="P:negative regulation of immune response"/>
    <property type="evidence" value="ECO:0007669"/>
    <property type="project" value="Ensembl"/>
</dbReference>
<dbReference type="CDD" id="cd05753">
    <property type="entry name" value="Ig2_FcgammaR_like"/>
    <property type="match status" value="1"/>
</dbReference>
<dbReference type="FunFam" id="2.60.40.10:FF:002104">
    <property type="entry name" value="Fc receptor-like B"/>
    <property type="match status" value="1"/>
</dbReference>
<dbReference type="FunFam" id="2.60.40.10:FF:000217">
    <property type="entry name" value="High affinity immunoglobulin gamma Fc receptor I"/>
    <property type="match status" value="1"/>
</dbReference>
<dbReference type="Gene3D" id="2.60.40.10">
    <property type="entry name" value="Immunoglobulins"/>
    <property type="match status" value="3"/>
</dbReference>
<dbReference type="InterPro" id="IPR007110">
    <property type="entry name" value="Ig-like_dom"/>
</dbReference>
<dbReference type="InterPro" id="IPR036179">
    <property type="entry name" value="Ig-like_dom_sf"/>
</dbReference>
<dbReference type="InterPro" id="IPR013783">
    <property type="entry name" value="Ig-like_fold"/>
</dbReference>
<dbReference type="InterPro" id="IPR050488">
    <property type="entry name" value="Ig_Fc_receptor"/>
</dbReference>
<dbReference type="InterPro" id="IPR003599">
    <property type="entry name" value="Ig_sub"/>
</dbReference>
<dbReference type="PANTHER" id="PTHR11481:SF94">
    <property type="entry name" value="FC RECEPTOR-LIKE B"/>
    <property type="match status" value="1"/>
</dbReference>
<dbReference type="PANTHER" id="PTHR11481">
    <property type="entry name" value="IMMUNOGLOBULIN FC RECEPTOR"/>
    <property type="match status" value="1"/>
</dbReference>
<dbReference type="Pfam" id="PF13895">
    <property type="entry name" value="Ig_2"/>
    <property type="match status" value="2"/>
</dbReference>
<dbReference type="SMART" id="SM00409">
    <property type="entry name" value="IG"/>
    <property type="match status" value="2"/>
</dbReference>
<dbReference type="SUPFAM" id="SSF48726">
    <property type="entry name" value="Immunoglobulin"/>
    <property type="match status" value="2"/>
</dbReference>
<dbReference type="PROSITE" id="PS50835">
    <property type="entry name" value="IG_LIKE"/>
    <property type="match status" value="1"/>
</dbReference>
<sequence length="426" mass="46904">MWPLTALLLLVPSSGQAATLEKPILSLHPPWTTIFKGERVTLKCDGYHPLLLELQPISTLWYLGHLLLPSHKKSIEVQTPGVYRCQTRGAPVSDPIHLSVSNDWLILQVPYAPVFEGEPLVLRCRGWYDKVVYKLHYYHDGQAVRYFHSSANYTVLQARASDSGRYQCSGTMRIPVESAPMFSAKVAVTVQELFRAPVLRVMGPREARGAALGGVVLRCDTRLHPQKRDTPLQFAFYKYSRAVRRFDWGAEYTVPEPEVEELESYWCEAATATRSVRKRSPWLQLPGPGSPLDPASTTAPAPWAAALAPGNRPLSFRKPPVSRSVPLVTSVRNTTSTGLQFPASGAPTAGPPACAPPTPLEQSAGALKPDVDLLLREMQLLKGLLSRVVLELKEPQALRELRGTPETPTSHFAVSPGTPETTPVES</sequence>
<gene>
    <name type="primary">FCRLB</name>
    <name type="synonym">FCRL2</name>
    <name type="synonym">FCRLM2</name>
    <name type="synonym">FCRY</name>
    <name type="synonym">FREB2</name>
</gene>
<organism>
    <name type="scientific">Homo sapiens</name>
    <name type="common">Human</name>
    <dbReference type="NCBI Taxonomy" id="9606"/>
    <lineage>
        <taxon>Eukaryota</taxon>
        <taxon>Metazoa</taxon>
        <taxon>Chordata</taxon>
        <taxon>Craniata</taxon>
        <taxon>Vertebrata</taxon>
        <taxon>Euteleostomi</taxon>
        <taxon>Mammalia</taxon>
        <taxon>Eutheria</taxon>
        <taxon>Euarchontoglires</taxon>
        <taxon>Primates</taxon>
        <taxon>Haplorrhini</taxon>
        <taxon>Catarrhini</taxon>
        <taxon>Hominidae</taxon>
        <taxon>Homo</taxon>
    </lineage>
</organism>
<accession>Q6BAA4</accession>
<accession>A2A3J5</accession>
<accession>A2A3J7</accession>
<accession>Q5VXA6</accession>
<accession>Q6BAA0</accession>
<accession>Q6BAA1</accession>
<accession>Q6BAA2</accession>
<accession>Q6BAA3</accession>
<accession>Q8IXZ7</accession>
<proteinExistence type="evidence at protein level"/>
<reference key="1">
    <citation type="journal article" date="2005" name="Gene">
        <title>FcRY, an Fc receptor related gene differentially expressed during B lymphocyte development and activation.</title>
        <authorList>
            <person name="Masuda K."/>
            <person name="Davis R.S."/>
            <person name="Maruyama T."/>
            <person name="Zhang J."/>
            <person name="He T."/>
            <person name="Cooper M.D."/>
            <person name="O-Wang J."/>
            <person name="Burrows P.D."/>
        </authorList>
    </citation>
    <scope>NUCLEOTIDE SEQUENCE [MRNA] (ISOFORM 1)</scope>
    <scope>TISSUE SPECIFICITY</scope>
</reference>
<reference key="2">
    <citation type="journal article" date="2005" name="Genes Immun.">
        <title>A new Fc receptor homolog, FREB2, found in germinal center B cells.</title>
        <authorList>
            <person name="Wilson T.J."/>
            <person name="Colonna M."/>
        </authorList>
    </citation>
    <scope>NUCLEOTIDE SEQUENCE [MRNA] (ISOFORM 1)</scope>
    <scope>SUBCELLULAR LOCATION</scope>
    <scope>TISSUE SPECIFICITY</scope>
    <source>
        <tissue>Lymphoma</tissue>
    </source>
</reference>
<reference key="3">
    <citation type="journal article" date="2005" name="Genomics">
        <title>Cloning and characterization of the human FCRL2 gene.</title>
        <authorList>
            <person name="Chikaev N.A."/>
            <person name="Bykova E.A."/>
            <person name="Najakshin A.M."/>
            <person name="Mechetina L.V."/>
            <person name="Volkova O.Y."/>
            <person name="Peklo M.M."/>
            <person name="Shevelev A.Y."/>
            <person name="Vlasik T.N."/>
            <person name="Roesch A."/>
            <person name="Vogt T."/>
            <person name="Taranin A.V."/>
        </authorList>
    </citation>
    <scope>NUCLEOTIDE SEQUENCE [MRNA] (ISOFORMS 1; 2; 3; 4 AND 5)</scope>
    <scope>SUBCELLULAR LOCATION</scope>
    <scope>TISSUE SPECIFICITY</scope>
    <source>
        <tissue>Placenta</tissue>
    </source>
</reference>
<reference key="4">
    <citation type="submission" date="2006-10" db="EMBL/GenBank/DDBJ databases">
        <authorList>
            <person name="Livingston R.J."/>
            <person name="Shaffer T."/>
            <person name="McFarland I."/>
            <person name="Nguyen C.P."/>
            <person name="Stanaway I.B."/>
            <person name="Rajkumar N."/>
            <person name="Johnson E.J."/>
            <person name="da Ponte S.H."/>
            <person name="Willa H."/>
            <person name="Ahearn M.O."/>
            <person name="Bertucci C."/>
            <person name="Acklestad J."/>
            <person name="Carroll A."/>
            <person name="Swanson J."/>
            <person name="Gildersleeve H.I."/>
            <person name="Nickerson D.A."/>
        </authorList>
    </citation>
    <scope>NUCLEOTIDE SEQUENCE [GENOMIC DNA] (ISOFORM 1)</scope>
</reference>
<reference key="5">
    <citation type="journal article" date="2004" name="Nat. Genet.">
        <title>Complete sequencing and characterization of 21,243 full-length human cDNAs.</title>
        <authorList>
            <person name="Ota T."/>
            <person name="Suzuki Y."/>
            <person name="Nishikawa T."/>
            <person name="Otsuki T."/>
            <person name="Sugiyama T."/>
            <person name="Irie R."/>
            <person name="Wakamatsu A."/>
            <person name="Hayashi K."/>
            <person name="Sato H."/>
            <person name="Nagai K."/>
            <person name="Kimura K."/>
            <person name="Makita H."/>
            <person name="Sekine M."/>
            <person name="Obayashi M."/>
            <person name="Nishi T."/>
            <person name="Shibahara T."/>
            <person name="Tanaka T."/>
            <person name="Ishii S."/>
            <person name="Yamamoto J."/>
            <person name="Saito K."/>
            <person name="Kawai Y."/>
            <person name="Isono Y."/>
            <person name="Nakamura Y."/>
            <person name="Nagahari K."/>
            <person name="Murakami K."/>
            <person name="Yasuda T."/>
            <person name="Iwayanagi T."/>
            <person name="Wagatsuma M."/>
            <person name="Shiratori A."/>
            <person name="Sudo H."/>
            <person name="Hosoiri T."/>
            <person name="Kaku Y."/>
            <person name="Kodaira H."/>
            <person name="Kondo H."/>
            <person name="Sugawara M."/>
            <person name="Takahashi M."/>
            <person name="Kanda K."/>
            <person name="Yokoi T."/>
            <person name="Furuya T."/>
            <person name="Kikkawa E."/>
            <person name="Omura Y."/>
            <person name="Abe K."/>
            <person name="Kamihara K."/>
            <person name="Katsuta N."/>
            <person name="Sato K."/>
            <person name="Tanikawa M."/>
            <person name="Yamazaki M."/>
            <person name="Ninomiya K."/>
            <person name="Ishibashi T."/>
            <person name="Yamashita H."/>
            <person name="Murakawa K."/>
            <person name="Fujimori K."/>
            <person name="Tanai H."/>
            <person name="Kimata M."/>
            <person name="Watanabe M."/>
            <person name="Hiraoka S."/>
            <person name="Chiba Y."/>
            <person name="Ishida S."/>
            <person name="Ono Y."/>
            <person name="Takiguchi S."/>
            <person name="Watanabe S."/>
            <person name="Yosida M."/>
            <person name="Hotuta T."/>
            <person name="Kusano J."/>
            <person name="Kanehori K."/>
            <person name="Takahashi-Fujii A."/>
            <person name="Hara H."/>
            <person name="Tanase T.-O."/>
            <person name="Nomura Y."/>
            <person name="Togiya S."/>
            <person name="Komai F."/>
            <person name="Hara R."/>
            <person name="Takeuchi K."/>
            <person name="Arita M."/>
            <person name="Imose N."/>
            <person name="Musashino K."/>
            <person name="Yuuki H."/>
            <person name="Oshima A."/>
            <person name="Sasaki N."/>
            <person name="Aotsuka S."/>
            <person name="Yoshikawa Y."/>
            <person name="Matsunawa H."/>
            <person name="Ichihara T."/>
            <person name="Shiohata N."/>
            <person name="Sano S."/>
            <person name="Moriya S."/>
            <person name="Momiyama H."/>
            <person name="Satoh N."/>
            <person name="Takami S."/>
            <person name="Terashima Y."/>
            <person name="Suzuki O."/>
            <person name="Nakagawa S."/>
            <person name="Senoh A."/>
            <person name="Mizoguchi H."/>
            <person name="Goto Y."/>
            <person name="Shimizu F."/>
            <person name="Wakebe H."/>
            <person name="Hishigaki H."/>
            <person name="Watanabe T."/>
            <person name="Sugiyama A."/>
            <person name="Takemoto M."/>
            <person name="Kawakami B."/>
            <person name="Yamazaki M."/>
            <person name="Watanabe K."/>
            <person name="Kumagai A."/>
            <person name="Itakura S."/>
            <person name="Fukuzumi Y."/>
            <person name="Fujimori Y."/>
            <person name="Komiyama M."/>
            <person name="Tashiro H."/>
            <person name="Tanigami A."/>
            <person name="Fujiwara T."/>
            <person name="Ono T."/>
            <person name="Yamada K."/>
            <person name="Fujii Y."/>
            <person name="Ozaki K."/>
            <person name="Hirao M."/>
            <person name="Ohmori Y."/>
            <person name="Kawabata A."/>
            <person name="Hikiji T."/>
            <person name="Kobatake N."/>
            <person name="Inagaki H."/>
            <person name="Ikema Y."/>
            <person name="Okamoto S."/>
            <person name="Okitani R."/>
            <person name="Kawakami T."/>
            <person name="Noguchi S."/>
            <person name="Itoh T."/>
            <person name="Shigeta K."/>
            <person name="Senba T."/>
            <person name="Matsumura K."/>
            <person name="Nakajima Y."/>
            <person name="Mizuno T."/>
            <person name="Morinaga M."/>
            <person name="Sasaki M."/>
            <person name="Togashi T."/>
            <person name="Oyama M."/>
            <person name="Hata H."/>
            <person name="Watanabe M."/>
            <person name="Komatsu T."/>
            <person name="Mizushima-Sugano J."/>
            <person name="Satoh T."/>
            <person name="Shirai Y."/>
            <person name="Takahashi Y."/>
            <person name="Nakagawa K."/>
            <person name="Okumura K."/>
            <person name="Nagase T."/>
            <person name="Nomura N."/>
            <person name="Kikuchi H."/>
            <person name="Masuho Y."/>
            <person name="Yamashita R."/>
            <person name="Nakai K."/>
            <person name="Yada T."/>
            <person name="Nakamura Y."/>
            <person name="Ohara O."/>
            <person name="Isogai T."/>
            <person name="Sugano S."/>
        </authorList>
    </citation>
    <scope>NUCLEOTIDE SEQUENCE [LARGE SCALE MRNA] (ISOFORM 1)</scope>
    <source>
        <tissue>Synovial cell</tissue>
    </source>
</reference>
<reference key="6">
    <citation type="journal article" date="2006" name="Nature">
        <title>The DNA sequence and biological annotation of human chromosome 1.</title>
        <authorList>
            <person name="Gregory S.G."/>
            <person name="Barlow K.F."/>
            <person name="McLay K.E."/>
            <person name="Kaul R."/>
            <person name="Swarbreck D."/>
            <person name="Dunham A."/>
            <person name="Scott C.E."/>
            <person name="Howe K.L."/>
            <person name="Woodfine K."/>
            <person name="Spencer C.C.A."/>
            <person name="Jones M.C."/>
            <person name="Gillson C."/>
            <person name="Searle S."/>
            <person name="Zhou Y."/>
            <person name="Kokocinski F."/>
            <person name="McDonald L."/>
            <person name="Evans R."/>
            <person name="Phillips K."/>
            <person name="Atkinson A."/>
            <person name="Cooper R."/>
            <person name="Jones C."/>
            <person name="Hall R.E."/>
            <person name="Andrews T.D."/>
            <person name="Lloyd C."/>
            <person name="Ainscough R."/>
            <person name="Almeida J.P."/>
            <person name="Ambrose K.D."/>
            <person name="Anderson F."/>
            <person name="Andrew R.W."/>
            <person name="Ashwell R.I.S."/>
            <person name="Aubin K."/>
            <person name="Babbage A.K."/>
            <person name="Bagguley C.L."/>
            <person name="Bailey J."/>
            <person name="Beasley H."/>
            <person name="Bethel G."/>
            <person name="Bird C.P."/>
            <person name="Bray-Allen S."/>
            <person name="Brown J.Y."/>
            <person name="Brown A.J."/>
            <person name="Buckley D."/>
            <person name="Burton J."/>
            <person name="Bye J."/>
            <person name="Carder C."/>
            <person name="Chapman J.C."/>
            <person name="Clark S.Y."/>
            <person name="Clarke G."/>
            <person name="Clee C."/>
            <person name="Cobley V."/>
            <person name="Collier R.E."/>
            <person name="Corby N."/>
            <person name="Coville G.J."/>
            <person name="Davies J."/>
            <person name="Deadman R."/>
            <person name="Dunn M."/>
            <person name="Earthrowl M."/>
            <person name="Ellington A.G."/>
            <person name="Errington H."/>
            <person name="Frankish A."/>
            <person name="Frankland J."/>
            <person name="French L."/>
            <person name="Garner P."/>
            <person name="Garnett J."/>
            <person name="Gay L."/>
            <person name="Ghori M.R.J."/>
            <person name="Gibson R."/>
            <person name="Gilby L.M."/>
            <person name="Gillett W."/>
            <person name="Glithero R.J."/>
            <person name="Grafham D.V."/>
            <person name="Griffiths C."/>
            <person name="Griffiths-Jones S."/>
            <person name="Grocock R."/>
            <person name="Hammond S."/>
            <person name="Harrison E.S.I."/>
            <person name="Hart E."/>
            <person name="Haugen E."/>
            <person name="Heath P.D."/>
            <person name="Holmes S."/>
            <person name="Holt K."/>
            <person name="Howden P.J."/>
            <person name="Hunt A.R."/>
            <person name="Hunt S.E."/>
            <person name="Hunter G."/>
            <person name="Isherwood J."/>
            <person name="James R."/>
            <person name="Johnson C."/>
            <person name="Johnson D."/>
            <person name="Joy A."/>
            <person name="Kay M."/>
            <person name="Kershaw J.K."/>
            <person name="Kibukawa M."/>
            <person name="Kimberley A.M."/>
            <person name="King A."/>
            <person name="Knights A.J."/>
            <person name="Lad H."/>
            <person name="Laird G."/>
            <person name="Lawlor S."/>
            <person name="Leongamornlert D.A."/>
            <person name="Lloyd D.M."/>
            <person name="Loveland J."/>
            <person name="Lovell J."/>
            <person name="Lush M.J."/>
            <person name="Lyne R."/>
            <person name="Martin S."/>
            <person name="Mashreghi-Mohammadi M."/>
            <person name="Matthews L."/>
            <person name="Matthews N.S.W."/>
            <person name="McLaren S."/>
            <person name="Milne S."/>
            <person name="Mistry S."/>
            <person name="Moore M.J.F."/>
            <person name="Nickerson T."/>
            <person name="O'Dell C.N."/>
            <person name="Oliver K."/>
            <person name="Palmeiri A."/>
            <person name="Palmer S.A."/>
            <person name="Parker A."/>
            <person name="Patel D."/>
            <person name="Pearce A.V."/>
            <person name="Peck A.I."/>
            <person name="Pelan S."/>
            <person name="Phelps K."/>
            <person name="Phillimore B.J."/>
            <person name="Plumb R."/>
            <person name="Rajan J."/>
            <person name="Raymond C."/>
            <person name="Rouse G."/>
            <person name="Saenphimmachak C."/>
            <person name="Sehra H.K."/>
            <person name="Sheridan E."/>
            <person name="Shownkeen R."/>
            <person name="Sims S."/>
            <person name="Skuce C.D."/>
            <person name="Smith M."/>
            <person name="Steward C."/>
            <person name="Subramanian S."/>
            <person name="Sycamore N."/>
            <person name="Tracey A."/>
            <person name="Tromans A."/>
            <person name="Van Helmond Z."/>
            <person name="Wall M."/>
            <person name="Wallis J.M."/>
            <person name="White S."/>
            <person name="Whitehead S.L."/>
            <person name="Wilkinson J.E."/>
            <person name="Willey D.L."/>
            <person name="Williams H."/>
            <person name="Wilming L."/>
            <person name="Wray P.W."/>
            <person name="Wu Z."/>
            <person name="Coulson A."/>
            <person name="Vaudin M."/>
            <person name="Sulston J.E."/>
            <person name="Durbin R.M."/>
            <person name="Hubbard T."/>
            <person name="Wooster R."/>
            <person name="Dunham I."/>
            <person name="Carter N.P."/>
            <person name="McVean G."/>
            <person name="Ross M.T."/>
            <person name="Harrow J."/>
            <person name="Olson M.V."/>
            <person name="Beck S."/>
            <person name="Rogers J."/>
            <person name="Bentley D.R."/>
        </authorList>
    </citation>
    <scope>NUCLEOTIDE SEQUENCE [LARGE SCALE GENOMIC DNA]</scope>
</reference>
<reference key="7">
    <citation type="journal article" date="2004" name="Genome Res.">
        <title>The status, quality, and expansion of the NIH full-length cDNA project: the Mammalian Gene Collection (MGC).</title>
        <authorList>
            <consortium name="The MGC Project Team"/>
        </authorList>
    </citation>
    <scope>NUCLEOTIDE SEQUENCE [LARGE SCALE MRNA] OF 135-426 (ISOFORM 1)</scope>
    <source>
        <tissue>Skin</tissue>
    </source>
</reference>
<reference key="8">
    <citation type="journal article" date="2005" name="Int. J. Cancer">
        <title>Novel melanoma antigen, FCRL/FREB, identified by cDNA profile comparison using DNA chip are immunogenic in multiple melanoma patients.</title>
        <authorList>
            <person name="Inozume T."/>
            <person name="Matsuzaki Y."/>
            <person name="Kurihara S."/>
            <person name="Fujita T."/>
            <person name="Yamamoto A."/>
            <person name="Aburatani H."/>
            <person name="Shimada S."/>
            <person name="Kawakami Y."/>
        </authorList>
    </citation>
    <scope>ALTERNATIVE SPLICING</scope>
    <scope>SUBCELLULAR LOCATION</scope>
    <scope>TISSUE SPECIFICITY</scope>
</reference>
<name>FCRLB_HUMAN</name>
<keyword id="KW-0025">Alternative splicing</keyword>
<keyword id="KW-0963">Cytoplasm</keyword>
<keyword id="KW-1015">Disulfide bond</keyword>
<keyword id="KW-0256">Endoplasmic reticulum</keyword>
<keyword id="KW-0325">Glycoprotein</keyword>
<keyword id="KW-0393">Immunoglobulin domain</keyword>
<keyword id="KW-1267">Proteomics identification</keyword>
<keyword id="KW-1185">Reference proteome</keyword>
<keyword id="KW-0677">Repeat</keyword>
<keyword id="KW-0732">Signal</keyword>
<comment type="subcellular location">
    <subcellularLocation>
        <location evidence="4 5 6">Cytoplasm</location>
    </subcellularLocation>
    <subcellularLocation>
        <location evidence="10">Endoplasmic reticulum</location>
    </subcellularLocation>
    <text evidence="5">Seems not to be secreted.</text>
</comment>
<comment type="alternative products">
    <event type="alternative splicing"/>
    <isoform>
        <id>Q6BAA4-1</id>
        <name>1</name>
        <sequence type="displayed"/>
    </isoform>
    <isoform>
        <id>Q6BAA4-2</id>
        <name>2</name>
        <name>FCRL2c1</name>
        <sequence type="described" ref="VSP_033421 VSP_033422"/>
    </isoform>
    <isoform>
        <id>Q6BAA4-3</id>
        <name>3</name>
        <name>FCRL2c2</name>
        <sequence type="described" ref="VSP_033419 VSP_033421 VSP_033422"/>
    </isoform>
    <isoform>
        <id>Q6BAA4-4</id>
        <name>4</name>
        <name>FCRL2b1</name>
        <sequence type="described" ref="VSP_033420 VSP_033423"/>
    </isoform>
    <isoform>
        <id>Q6BAA4-5</id>
        <name>5</name>
        <name>FCRL2b2</name>
        <sequence type="described" ref="VSP_033419 VSP_033420 VSP_033423"/>
    </isoform>
    <text>Additional isoforms seem to exist.</text>
</comment>
<comment type="tissue specificity">
    <text evidence="4 5 6 7">Expressed at low levels. Expressed in B-lymphocytes. Detected in tonsil, lung, kidney, spleen and placenta. Expressed by a small subset of germinal center B-cells in tonsils and by melanocytes (at protein level).</text>
</comment>
<feature type="signal peptide" evidence="1">
    <location>
        <begin position="1"/>
        <end position="17"/>
    </location>
</feature>
<feature type="chain" id="PRO_0000332992" description="Fc receptor-like B">
    <location>
        <begin position="18"/>
        <end position="426"/>
    </location>
</feature>
<feature type="domain" description="Ig-like C2-type 1">
    <location>
        <begin position="23"/>
        <end position="101"/>
    </location>
</feature>
<feature type="domain" description="Ig-like C2-type 2">
    <location>
        <begin position="103"/>
        <end position="189"/>
    </location>
</feature>
<feature type="region of interest" description="Disordered" evidence="3">
    <location>
        <begin position="400"/>
        <end position="426"/>
    </location>
</feature>
<feature type="compositionally biased region" description="Polar residues" evidence="3">
    <location>
        <begin position="406"/>
        <end position="426"/>
    </location>
</feature>
<feature type="glycosylation site" description="N-linked (GlcNAc...) asparagine" evidence="1">
    <location>
        <position position="152"/>
    </location>
</feature>
<feature type="disulfide bond" evidence="2">
    <location>
        <begin position="44"/>
        <end position="85"/>
    </location>
</feature>
<feature type="disulfide bond" evidence="2">
    <location>
        <begin position="124"/>
        <end position="168"/>
    </location>
</feature>
<feature type="splice variant" id="VSP_033419" description="In isoform 3 and isoform 5." evidence="8">
    <location>
        <begin position="11"/>
        <end position="17"/>
    </location>
</feature>
<feature type="splice variant" id="VSP_033420" description="In isoform 4 and isoform 5." evidence="8">
    <original>ELFRAPVLRVMGPREARGAALGGVVLRCDTRLHPQKRDTPLQFAFYKYSRAVRRFDWGAEYTVPEPEVEELESYWCEAATATRSVRKRSPWLQLPGPGSPLDPASTTAPAPWAAALAPGNRPLSFRK</original>
    <variation>AARCAASTGAPSTQSRSPRSRSSNRTGARRLPPPAVSGNAVRGCSSRGRVLPWTRPPPPPQLHGPQPWLLVIGRFPSESPRCPDRSRWSPPSGTPPPPGCSSRRAAPRLRGHPPALRRRPWNNRLEP</variation>
    <location>
        <begin position="192"/>
        <end position="318"/>
    </location>
</feature>
<feature type="splice variant" id="VSP_033421" description="In isoform 2 and isoform 3." evidence="8">
    <original>LFRAPVLRVMGPREARGAALGGVVLRCDTRLHPQKRDTPLQFAFYKYSRAVRRFDWGAEYTVPEPEVEELESYWCEAATATRS</original>
    <variation>ARHAAAVRVLQVQPRGAPLRLGRRVHSPGARGRGARIVLVRGGYRHPQCPETQSVAAAPGAGFSPGPGLHHRPSSMGRSLGSW</variation>
    <location>
        <begin position="193"/>
        <end position="275"/>
    </location>
</feature>
<feature type="splice variant" id="VSP_033422" description="In isoform 2 and isoform 3." evidence="8">
    <location>
        <begin position="276"/>
        <end position="426"/>
    </location>
</feature>
<feature type="splice variant" id="VSP_033423" description="In isoform 4 and isoform 5." evidence="8">
    <location>
        <begin position="319"/>
        <end position="426"/>
    </location>
</feature>
<feature type="sequence conflict" description="In Ref. 3; AAT77989/AAT77990." evidence="9" ref="3">
    <original>AT</original>
    <variation>VP</variation>
    <location>
        <begin position="18"/>
        <end position="19"/>
    </location>
</feature>
<evidence type="ECO:0000255" key="1"/>
<evidence type="ECO:0000255" key="2">
    <source>
        <dbReference type="PROSITE-ProRule" id="PRU00114"/>
    </source>
</evidence>
<evidence type="ECO:0000256" key="3">
    <source>
        <dbReference type="SAM" id="MobiDB-lite"/>
    </source>
</evidence>
<evidence type="ECO:0000269" key="4">
    <source>
    </source>
</evidence>
<evidence type="ECO:0000269" key="5">
    <source>
    </source>
</evidence>
<evidence type="ECO:0000269" key="6">
    <source>
    </source>
</evidence>
<evidence type="ECO:0000269" key="7">
    <source>
    </source>
</evidence>
<evidence type="ECO:0000303" key="8">
    <source>
    </source>
</evidence>
<evidence type="ECO:0000305" key="9"/>
<evidence type="ECO:0000305" key="10">
    <source>
    </source>
</evidence>